<name>ARO1_ASPFN</name>
<comment type="function">
    <text evidence="1">The AROM polypeptide catalyzes 5 consecutive enzymatic reactions in prechorismate polyaromatic amino acid biosynthesis.</text>
</comment>
<comment type="catalytic activity">
    <reaction evidence="1">
        <text>7-phospho-2-dehydro-3-deoxy-D-arabino-heptonate = 3-dehydroquinate + phosphate</text>
        <dbReference type="Rhea" id="RHEA:21968"/>
        <dbReference type="ChEBI" id="CHEBI:32364"/>
        <dbReference type="ChEBI" id="CHEBI:43474"/>
        <dbReference type="ChEBI" id="CHEBI:58394"/>
        <dbReference type="EC" id="4.2.3.4"/>
    </reaction>
</comment>
<comment type="catalytic activity">
    <reaction evidence="1">
        <text>3-dehydroquinate = 3-dehydroshikimate + H2O</text>
        <dbReference type="Rhea" id="RHEA:21096"/>
        <dbReference type="ChEBI" id="CHEBI:15377"/>
        <dbReference type="ChEBI" id="CHEBI:16630"/>
        <dbReference type="ChEBI" id="CHEBI:32364"/>
        <dbReference type="EC" id="4.2.1.10"/>
    </reaction>
</comment>
<comment type="catalytic activity">
    <reaction evidence="1">
        <text>shikimate + NADP(+) = 3-dehydroshikimate + NADPH + H(+)</text>
        <dbReference type="Rhea" id="RHEA:17737"/>
        <dbReference type="ChEBI" id="CHEBI:15378"/>
        <dbReference type="ChEBI" id="CHEBI:16630"/>
        <dbReference type="ChEBI" id="CHEBI:36208"/>
        <dbReference type="ChEBI" id="CHEBI:57783"/>
        <dbReference type="ChEBI" id="CHEBI:58349"/>
        <dbReference type="EC" id="1.1.1.25"/>
    </reaction>
</comment>
<comment type="catalytic activity">
    <reaction evidence="1">
        <text>shikimate + ATP = 3-phosphoshikimate + ADP + H(+)</text>
        <dbReference type="Rhea" id="RHEA:13121"/>
        <dbReference type="ChEBI" id="CHEBI:15378"/>
        <dbReference type="ChEBI" id="CHEBI:30616"/>
        <dbReference type="ChEBI" id="CHEBI:36208"/>
        <dbReference type="ChEBI" id="CHEBI:145989"/>
        <dbReference type="ChEBI" id="CHEBI:456216"/>
        <dbReference type="EC" id="2.7.1.71"/>
    </reaction>
</comment>
<comment type="catalytic activity">
    <reaction evidence="1">
        <text>3-phosphoshikimate + phosphoenolpyruvate = 5-O-(1-carboxyvinyl)-3-phosphoshikimate + phosphate</text>
        <dbReference type="Rhea" id="RHEA:21256"/>
        <dbReference type="ChEBI" id="CHEBI:43474"/>
        <dbReference type="ChEBI" id="CHEBI:57701"/>
        <dbReference type="ChEBI" id="CHEBI:58702"/>
        <dbReference type="ChEBI" id="CHEBI:145989"/>
        <dbReference type="EC" id="2.5.1.19"/>
    </reaction>
</comment>
<comment type="cofactor">
    <cofactor>
        <name>Zn(2+)</name>
        <dbReference type="ChEBI" id="CHEBI:29105"/>
    </cofactor>
    <text>Binds 2 Zn(2+) ions per subunit.</text>
</comment>
<comment type="pathway">
    <text evidence="1">Metabolic intermediate biosynthesis; chorismate biosynthesis; chorismate from D-erythrose 4-phosphate and phosphoenolpyruvate: step 2/7.</text>
</comment>
<comment type="pathway">
    <text evidence="1">Metabolic intermediate biosynthesis; chorismate biosynthesis; chorismate from D-erythrose 4-phosphate and phosphoenolpyruvate: step 3/7.</text>
</comment>
<comment type="pathway">
    <text evidence="1">Metabolic intermediate biosynthesis; chorismate biosynthesis; chorismate from D-erythrose 4-phosphate and phosphoenolpyruvate: step 4/7.</text>
</comment>
<comment type="pathway">
    <text evidence="1">Metabolic intermediate biosynthesis; chorismate biosynthesis; chorismate from D-erythrose 4-phosphate and phosphoenolpyruvate: step 5/7.</text>
</comment>
<comment type="pathway">
    <text evidence="1">Metabolic intermediate biosynthesis; chorismate biosynthesis; chorismate from D-erythrose 4-phosphate and phosphoenolpyruvate: step 6/7.</text>
</comment>
<comment type="subunit">
    <text evidence="1">Homodimer.</text>
</comment>
<comment type="subcellular location">
    <subcellularLocation>
        <location evidence="1">Cytoplasm</location>
    </subcellularLocation>
</comment>
<comment type="similarity">
    <text evidence="1">In the N-terminal section; belongs to the sugar phosphate cyclases superfamily. Dehydroquinate synthase family.</text>
</comment>
<comment type="similarity">
    <text evidence="1">In the 2nd section; belongs to the EPSP synthase family.</text>
</comment>
<comment type="similarity">
    <text evidence="1">In the 3rd section; belongs to the shikimate kinase family.</text>
</comment>
<comment type="similarity">
    <text evidence="1">In the 4th section; belongs to the type-I 3-dehydroquinase family.</text>
</comment>
<comment type="similarity">
    <text evidence="1">In the C-terminal section; belongs to the shikimate dehydrogenase family.</text>
</comment>
<organism>
    <name type="scientific">Aspergillus flavus (strain ATCC 200026 / FGSC A1120 / IAM 13836 / NRRL 3357 / JCM 12722 / SRRC 167)</name>
    <dbReference type="NCBI Taxonomy" id="332952"/>
    <lineage>
        <taxon>Eukaryota</taxon>
        <taxon>Fungi</taxon>
        <taxon>Dikarya</taxon>
        <taxon>Ascomycota</taxon>
        <taxon>Pezizomycotina</taxon>
        <taxon>Eurotiomycetes</taxon>
        <taxon>Eurotiomycetidae</taxon>
        <taxon>Eurotiales</taxon>
        <taxon>Aspergillaceae</taxon>
        <taxon>Aspergillus</taxon>
        <taxon>Aspergillus subgen. Circumdati</taxon>
    </lineage>
</organism>
<dbReference type="EC" id="4.2.3.4" evidence="1"/>
<dbReference type="EC" id="2.5.1.19" evidence="1"/>
<dbReference type="EC" id="2.7.1.71" evidence="1"/>
<dbReference type="EC" id="4.2.1.10" evidence="1"/>
<dbReference type="EC" id="1.1.1.25" evidence="1"/>
<dbReference type="EMBL" id="EQ963474">
    <property type="protein sequence ID" value="EED54516.1"/>
    <property type="molecule type" value="Genomic_DNA"/>
</dbReference>
<dbReference type="RefSeq" id="XP_002375788.1">
    <property type="nucleotide sequence ID" value="XM_002375747.1"/>
</dbReference>
<dbReference type="SMR" id="B8N4Q9"/>
<dbReference type="STRING" id="332952.B8N4Q9"/>
<dbReference type="EnsemblFungi" id="EED54516">
    <property type="protein sequence ID" value="EED54516"/>
    <property type="gene ID" value="AFLA_017680"/>
</dbReference>
<dbReference type="VEuPathDB" id="FungiDB:AFLA_002224"/>
<dbReference type="eggNOG" id="KOG0692">
    <property type="taxonomic scope" value="Eukaryota"/>
</dbReference>
<dbReference type="HOGENOM" id="CLU_001201_1_2_1"/>
<dbReference type="OMA" id="SWANMSW"/>
<dbReference type="UniPathway" id="UPA00053">
    <property type="reaction ID" value="UER00085"/>
</dbReference>
<dbReference type="UniPathway" id="UPA00053">
    <property type="reaction ID" value="UER00086"/>
</dbReference>
<dbReference type="UniPathway" id="UPA00053">
    <property type="reaction ID" value="UER00087"/>
</dbReference>
<dbReference type="UniPathway" id="UPA00053">
    <property type="reaction ID" value="UER00088"/>
</dbReference>
<dbReference type="UniPathway" id="UPA00053">
    <property type="reaction ID" value="UER00089"/>
</dbReference>
<dbReference type="GO" id="GO:0005737">
    <property type="term" value="C:cytoplasm"/>
    <property type="evidence" value="ECO:0007669"/>
    <property type="project" value="UniProtKB-SubCell"/>
</dbReference>
<dbReference type="GO" id="GO:0003855">
    <property type="term" value="F:3-dehydroquinate dehydratase activity"/>
    <property type="evidence" value="ECO:0007669"/>
    <property type="project" value="UniProtKB-UniRule"/>
</dbReference>
<dbReference type="GO" id="GO:0003856">
    <property type="term" value="F:3-dehydroquinate synthase activity"/>
    <property type="evidence" value="ECO:0007669"/>
    <property type="project" value="UniProtKB-UniRule"/>
</dbReference>
<dbReference type="GO" id="GO:0003866">
    <property type="term" value="F:3-phosphoshikimate 1-carboxyvinyltransferase activity"/>
    <property type="evidence" value="ECO:0007669"/>
    <property type="project" value="UniProtKB-UniRule"/>
</dbReference>
<dbReference type="GO" id="GO:0005524">
    <property type="term" value="F:ATP binding"/>
    <property type="evidence" value="ECO:0007669"/>
    <property type="project" value="UniProtKB-UniRule"/>
</dbReference>
<dbReference type="GO" id="GO:0046872">
    <property type="term" value="F:metal ion binding"/>
    <property type="evidence" value="ECO:0007669"/>
    <property type="project" value="UniProtKB-UniRule"/>
</dbReference>
<dbReference type="GO" id="GO:0004764">
    <property type="term" value="F:shikimate 3-dehydrogenase (NADP+) activity"/>
    <property type="evidence" value="ECO:0007669"/>
    <property type="project" value="UniProtKB-UniRule"/>
</dbReference>
<dbReference type="GO" id="GO:0004765">
    <property type="term" value="F:shikimate kinase activity"/>
    <property type="evidence" value="ECO:0007669"/>
    <property type="project" value="UniProtKB-UniRule"/>
</dbReference>
<dbReference type="GO" id="GO:0008652">
    <property type="term" value="P:amino acid biosynthetic process"/>
    <property type="evidence" value="ECO:0007669"/>
    <property type="project" value="UniProtKB-KW"/>
</dbReference>
<dbReference type="GO" id="GO:0009073">
    <property type="term" value="P:aromatic amino acid family biosynthetic process"/>
    <property type="evidence" value="ECO:0007669"/>
    <property type="project" value="UniProtKB-UniRule"/>
</dbReference>
<dbReference type="GO" id="GO:0009423">
    <property type="term" value="P:chorismate biosynthetic process"/>
    <property type="evidence" value="ECO:0007669"/>
    <property type="project" value="UniProtKB-UniRule"/>
</dbReference>
<dbReference type="CDD" id="cd00502">
    <property type="entry name" value="DHQase_I"/>
    <property type="match status" value="1"/>
</dbReference>
<dbReference type="CDD" id="cd08195">
    <property type="entry name" value="DHQS"/>
    <property type="match status" value="1"/>
</dbReference>
<dbReference type="CDD" id="cd01556">
    <property type="entry name" value="EPSP_synthase"/>
    <property type="match status" value="1"/>
</dbReference>
<dbReference type="CDD" id="cd01065">
    <property type="entry name" value="NAD_bind_Shikimate_DH"/>
    <property type="match status" value="1"/>
</dbReference>
<dbReference type="CDD" id="cd00464">
    <property type="entry name" value="SK"/>
    <property type="match status" value="1"/>
</dbReference>
<dbReference type="FunFam" id="1.20.1090.10:FF:000007">
    <property type="entry name" value="Pentafunctional AROM polypeptide"/>
    <property type="match status" value="1"/>
</dbReference>
<dbReference type="FunFam" id="3.20.20.70:FF:000135">
    <property type="entry name" value="Pentafunctional AROM polypeptide"/>
    <property type="match status" value="1"/>
</dbReference>
<dbReference type="FunFam" id="3.40.50.1970:FF:000007">
    <property type="entry name" value="Pentafunctional AROM polypeptide"/>
    <property type="match status" value="1"/>
</dbReference>
<dbReference type="FunFam" id="3.40.50.300:FF:001256">
    <property type="entry name" value="Pentafunctional AROM polypeptide"/>
    <property type="match status" value="1"/>
</dbReference>
<dbReference type="FunFam" id="3.65.10.10:FF:000007">
    <property type="entry name" value="Pentafunctional AROM polypeptide"/>
    <property type="match status" value="1"/>
</dbReference>
<dbReference type="FunFam" id="3.65.10.10:FF:000008">
    <property type="entry name" value="Pentafunctional AROM polypeptide"/>
    <property type="match status" value="1"/>
</dbReference>
<dbReference type="Gene3D" id="3.40.50.1970">
    <property type="match status" value="1"/>
</dbReference>
<dbReference type="Gene3D" id="3.20.20.70">
    <property type="entry name" value="Aldolase class I"/>
    <property type="match status" value="1"/>
</dbReference>
<dbReference type="Gene3D" id="1.20.1090.10">
    <property type="entry name" value="Dehydroquinate synthase-like - alpha domain"/>
    <property type="match status" value="1"/>
</dbReference>
<dbReference type="Gene3D" id="3.65.10.10">
    <property type="entry name" value="Enolpyruvate transferase domain"/>
    <property type="match status" value="2"/>
</dbReference>
<dbReference type="Gene3D" id="3.40.50.10860">
    <property type="entry name" value="Leucine Dehydrogenase, chain A, domain 1"/>
    <property type="match status" value="1"/>
</dbReference>
<dbReference type="Gene3D" id="3.40.50.720">
    <property type="entry name" value="NAD(P)-binding Rossmann-like Domain"/>
    <property type="match status" value="1"/>
</dbReference>
<dbReference type="Gene3D" id="3.40.50.300">
    <property type="entry name" value="P-loop containing nucleotide triphosphate hydrolases"/>
    <property type="match status" value="1"/>
</dbReference>
<dbReference type="HAMAP" id="MF_00210">
    <property type="entry name" value="EPSP_synth"/>
    <property type="match status" value="1"/>
</dbReference>
<dbReference type="HAMAP" id="MF_03143">
    <property type="entry name" value="Pentafunct_AroM"/>
    <property type="match status" value="1"/>
</dbReference>
<dbReference type="HAMAP" id="MF_00109">
    <property type="entry name" value="Shikimate_kinase"/>
    <property type="match status" value="1"/>
</dbReference>
<dbReference type="InterPro" id="IPR018508">
    <property type="entry name" value="3-dehydroquinate_DH_AS"/>
</dbReference>
<dbReference type="InterPro" id="IPR013785">
    <property type="entry name" value="Aldolase_TIM"/>
</dbReference>
<dbReference type="InterPro" id="IPR046346">
    <property type="entry name" value="Aminoacid_DH-like_N_sf"/>
</dbReference>
<dbReference type="InterPro" id="IPR016037">
    <property type="entry name" value="DHQ_synth_AroB"/>
</dbReference>
<dbReference type="InterPro" id="IPR030960">
    <property type="entry name" value="DHQS/DOIS_N"/>
</dbReference>
<dbReference type="InterPro" id="IPR056179">
    <property type="entry name" value="DHQS_C"/>
</dbReference>
<dbReference type="InterPro" id="IPR001381">
    <property type="entry name" value="DHquinase_I"/>
</dbReference>
<dbReference type="InterPro" id="IPR001986">
    <property type="entry name" value="Enolpyruvate_Tfrase_dom"/>
</dbReference>
<dbReference type="InterPro" id="IPR036968">
    <property type="entry name" value="Enolpyruvate_Tfrase_sf"/>
</dbReference>
<dbReference type="InterPro" id="IPR006264">
    <property type="entry name" value="EPSP_synthase"/>
</dbReference>
<dbReference type="InterPro" id="IPR023193">
    <property type="entry name" value="EPSP_synthase_CS"/>
</dbReference>
<dbReference type="InterPro" id="IPR036291">
    <property type="entry name" value="NAD(P)-bd_dom_sf"/>
</dbReference>
<dbReference type="InterPro" id="IPR027417">
    <property type="entry name" value="P-loop_NTPase"/>
</dbReference>
<dbReference type="InterPro" id="IPR008289">
    <property type="entry name" value="Pentafunct_AroM"/>
</dbReference>
<dbReference type="InterPro" id="IPR013792">
    <property type="entry name" value="RNA3'P_cycl/enolpyr_Trfase_a/b"/>
</dbReference>
<dbReference type="InterPro" id="IPR041121">
    <property type="entry name" value="SDH_C"/>
</dbReference>
<dbReference type="InterPro" id="IPR031322">
    <property type="entry name" value="Shikimate/glucono_kinase"/>
</dbReference>
<dbReference type="InterPro" id="IPR013708">
    <property type="entry name" value="Shikimate_DH-bd_N"/>
</dbReference>
<dbReference type="InterPro" id="IPR010110">
    <property type="entry name" value="Shikimate_DH_AroM-type"/>
</dbReference>
<dbReference type="InterPro" id="IPR000623">
    <property type="entry name" value="Shikimate_kinase/TSH1"/>
</dbReference>
<dbReference type="InterPro" id="IPR023000">
    <property type="entry name" value="Shikimate_kinase_CS"/>
</dbReference>
<dbReference type="NCBIfam" id="TIGR01356">
    <property type="entry name" value="aroA"/>
    <property type="match status" value="1"/>
</dbReference>
<dbReference type="NCBIfam" id="TIGR01357">
    <property type="entry name" value="aroB"/>
    <property type="match status" value="1"/>
</dbReference>
<dbReference type="NCBIfam" id="TIGR01093">
    <property type="entry name" value="aroD"/>
    <property type="match status" value="1"/>
</dbReference>
<dbReference type="NCBIfam" id="TIGR01809">
    <property type="entry name" value="Shik-DH-AROM"/>
    <property type="match status" value="1"/>
</dbReference>
<dbReference type="PANTHER" id="PTHR21090">
    <property type="entry name" value="AROM/DEHYDROQUINATE SYNTHASE"/>
    <property type="match status" value="1"/>
</dbReference>
<dbReference type="PANTHER" id="PTHR21090:SF5">
    <property type="entry name" value="PENTAFUNCTIONAL AROM POLYPEPTIDE"/>
    <property type="match status" value="1"/>
</dbReference>
<dbReference type="Pfam" id="PF01761">
    <property type="entry name" value="DHQ_synthase"/>
    <property type="match status" value="1"/>
</dbReference>
<dbReference type="Pfam" id="PF24621">
    <property type="entry name" value="DHQS_C"/>
    <property type="match status" value="1"/>
</dbReference>
<dbReference type="Pfam" id="PF01487">
    <property type="entry name" value="DHquinase_I"/>
    <property type="match status" value="1"/>
</dbReference>
<dbReference type="Pfam" id="PF00275">
    <property type="entry name" value="EPSP_synthase"/>
    <property type="match status" value="1"/>
</dbReference>
<dbReference type="Pfam" id="PF18317">
    <property type="entry name" value="SDH_C"/>
    <property type="match status" value="1"/>
</dbReference>
<dbReference type="Pfam" id="PF08501">
    <property type="entry name" value="Shikimate_dh_N"/>
    <property type="match status" value="1"/>
</dbReference>
<dbReference type="Pfam" id="PF01202">
    <property type="entry name" value="SKI"/>
    <property type="match status" value="1"/>
</dbReference>
<dbReference type="PIRSF" id="PIRSF000514">
    <property type="entry name" value="Pentafunct_AroM"/>
    <property type="match status" value="1"/>
</dbReference>
<dbReference type="PRINTS" id="PR01100">
    <property type="entry name" value="SHIKIMTKNASE"/>
</dbReference>
<dbReference type="SUPFAM" id="SSF51569">
    <property type="entry name" value="Aldolase"/>
    <property type="match status" value="1"/>
</dbReference>
<dbReference type="SUPFAM" id="SSF53223">
    <property type="entry name" value="Aminoacid dehydrogenase-like, N-terminal domain"/>
    <property type="match status" value="1"/>
</dbReference>
<dbReference type="SUPFAM" id="SSF56796">
    <property type="entry name" value="Dehydroquinate synthase-like"/>
    <property type="match status" value="1"/>
</dbReference>
<dbReference type="SUPFAM" id="SSF55205">
    <property type="entry name" value="EPT/RTPC-like"/>
    <property type="match status" value="1"/>
</dbReference>
<dbReference type="SUPFAM" id="SSF51735">
    <property type="entry name" value="NAD(P)-binding Rossmann-fold domains"/>
    <property type="match status" value="1"/>
</dbReference>
<dbReference type="SUPFAM" id="SSF52540">
    <property type="entry name" value="P-loop containing nucleoside triphosphate hydrolases"/>
    <property type="match status" value="1"/>
</dbReference>
<dbReference type="PROSITE" id="PS01028">
    <property type="entry name" value="DEHYDROQUINASE_I"/>
    <property type="match status" value="1"/>
</dbReference>
<dbReference type="PROSITE" id="PS00104">
    <property type="entry name" value="EPSP_SYNTHASE_1"/>
    <property type="match status" value="1"/>
</dbReference>
<dbReference type="PROSITE" id="PS00885">
    <property type="entry name" value="EPSP_SYNTHASE_2"/>
    <property type="match status" value="1"/>
</dbReference>
<dbReference type="PROSITE" id="PS01128">
    <property type="entry name" value="SHIKIMATE_KINASE"/>
    <property type="match status" value="1"/>
</dbReference>
<protein>
    <recommendedName>
        <fullName evidence="1">Pentafunctional AROM polypeptide</fullName>
    </recommendedName>
    <domain>
        <recommendedName>
            <fullName evidence="1">3-dehydroquinate synthase</fullName>
            <shortName evidence="1">DHQS</shortName>
            <ecNumber evidence="1">4.2.3.4</ecNumber>
        </recommendedName>
    </domain>
    <domain>
        <recommendedName>
            <fullName evidence="1">3-phosphoshikimate 1-carboxyvinyltransferase</fullName>
            <ecNumber evidence="1">2.5.1.19</ecNumber>
        </recommendedName>
        <alternativeName>
            <fullName evidence="1">5-enolpyruvylshikimate-3-phosphate synthase</fullName>
            <shortName evidence="1">EPSP synthase</shortName>
            <shortName evidence="1">EPSPS</shortName>
        </alternativeName>
    </domain>
    <domain>
        <recommendedName>
            <fullName evidence="1">Shikimate kinase</fullName>
            <shortName evidence="1">SK</shortName>
            <ecNumber evidence="1">2.7.1.71</ecNumber>
        </recommendedName>
    </domain>
    <domain>
        <recommendedName>
            <fullName evidence="1">3-dehydroquinate dehydratase</fullName>
            <shortName evidence="1">3-dehydroquinase</shortName>
            <ecNumber evidence="1">4.2.1.10</ecNumber>
        </recommendedName>
    </domain>
    <domain>
        <recommendedName>
            <fullName evidence="1">Shikimate dehydrogenase</fullName>
            <ecNumber evidence="1">1.1.1.25</ecNumber>
        </recommendedName>
    </domain>
</protein>
<gene>
    <name evidence="1" type="primary">aroM</name>
    <name type="ORF">AFLA_017680</name>
</gene>
<proteinExistence type="inferred from homology"/>
<accession>B8N4Q9</accession>
<keyword id="KW-0028">Amino-acid biosynthesis</keyword>
<keyword id="KW-0057">Aromatic amino acid biosynthesis</keyword>
<keyword id="KW-0067">ATP-binding</keyword>
<keyword id="KW-0963">Cytoplasm</keyword>
<keyword id="KW-0418">Kinase</keyword>
<keyword id="KW-0456">Lyase</keyword>
<keyword id="KW-0479">Metal-binding</keyword>
<keyword id="KW-0511">Multifunctional enzyme</keyword>
<keyword id="KW-0521">NADP</keyword>
<keyword id="KW-0547">Nucleotide-binding</keyword>
<keyword id="KW-0560">Oxidoreductase</keyword>
<keyword id="KW-0808">Transferase</keyword>
<keyword id="KW-0862">Zinc</keyword>
<feature type="chain" id="PRO_0000406705" description="Pentafunctional AROM polypeptide">
    <location>
        <begin position="1"/>
        <end position="1578"/>
    </location>
</feature>
<feature type="region of interest" description="3-dehydroquinate synthase">
    <location>
        <begin position="1"/>
        <end position="384"/>
    </location>
</feature>
<feature type="region of interest" description="EPSP synthase">
    <location>
        <begin position="397"/>
        <end position="842"/>
    </location>
</feature>
<feature type="region of interest" description="Shikimate kinase">
    <location>
        <begin position="864"/>
        <end position="1055"/>
    </location>
</feature>
<feature type="region of interest" description="3-dehydroquinase">
    <location>
        <begin position="1056"/>
        <end position="1276"/>
    </location>
</feature>
<feature type="region of interest" description="Shikimate dehydrogenase">
    <location>
        <begin position="1289"/>
        <end position="1578"/>
    </location>
</feature>
<feature type="active site" description="Proton acceptor; for 3-dehydroquinate synthase activity" evidence="1">
    <location>
        <position position="260"/>
    </location>
</feature>
<feature type="active site" description="Proton acceptor; for 3-dehydroquinate synthase activity" evidence="1">
    <location>
        <position position="275"/>
    </location>
</feature>
<feature type="active site" description="For EPSP synthase activity" evidence="1">
    <location>
        <position position="824"/>
    </location>
</feature>
<feature type="active site" description="Proton acceptor; for 3-dehydroquinate dehydratase activity" evidence="1">
    <location>
        <position position="1179"/>
    </location>
</feature>
<feature type="active site" description="Schiff-base intermediate with substrate; for 3-dehydroquinate dehydratase activity" evidence="1">
    <location>
        <position position="1207"/>
    </location>
</feature>
<feature type="binding site" evidence="1">
    <location>
        <begin position="44"/>
        <end position="46"/>
    </location>
    <ligand>
        <name>NAD(+)</name>
        <dbReference type="ChEBI" id="CHEBI:57540"/>
    </ligand>
</feature>
<feature type="binding site" evidence="1">
    <location>
        <begin position="81"/>
        <end position="84"/>
    </location>
    <ligand>
        <name>NAD(+)</name>
        <dbReference type="ChEBI" id="CHEBI:57540"/>
    </ligand>
</feature>
<feature type="binding site" evidence="1">
    <location>
        <begin position="114"/>
        <end position="116"/>
    </location>
    <ligand>
        <name>NAD(+)</name>
        <dbReference type="ChEBI" id="CHEBI:57540"/>
    </ligand>
</feature>
<feature type="binding site" evidence="1">
    <location>
        <position position="119"/>
    </location>
    <ligand>
        <name>NAD(+)</name>
        <dbReference type="ChEBI" id="CHEBI:57540"/>
    </ligand>
</feature>
<feature type="binding site" evidence="1">
    <location>
        <position position="130"/>
    </location>
    <ligand>
        <name>7-phospho-2-dehydro-3-deoxy-D-arabino-heptonate</name>
        <dbReference type="ChEBI" id="CHEBI:58394"/>
    </ligand>
</feature>
<feature type="binding site" evidence="1">
    <location>
        <begin position="139"/>
        <end position="140"/>
    </location>
    <ligand>
        <name>NAD(+)</name>
        <dbReference type="ChEBI" id="CHEBI:57540"/>
    </ligand>
</feature>
<feature type="binding site" evidence="1">
    <location>
        <position position="146"/>
    </location>
    <ligand>
        <name>7-phospho-2-dehydro-3-deoxy-D-arabino-heptonate</name>
        <dbReference type="ChEBI" id="CHEBI:58394"/>
    </ligand>
</feature>
<feature type="binding site" evidence="1">
    <location>
        <position position="152"/>
    </location>
    <ligand>
        <name>7-phospho-2-dehydro-3-deoxy-D-arabino-heptonate</name>
        <dbReference type="ChEBI" id="CHEBI:58394"/>
    </ligand>
</feature>
<feature type="binding site" evidence="1">
    <location>
        <position position="161"/>
    </location>
    <ligand>
        <name>NAD(+)</name>
        <dbReference type="ChEBI" id="CHEBI:57540"/>
    </ligand>
</feature>
<feature type="binding site" evidence="1">
    <location>
        <position position="162"/>
    </location>
    <ligand>
        <name>7-phospho-2-dehydro-3-deoxy-D-arabino-heptonate</name>
        <dbReference type="ChEBI" id="CHEBI:58394"/>
    </ligand>
</feature>
<feature type="binding site" evidence="1">
    <location>
        <begin position="179"/>
        <end position="182"/>
    </location>
    <ligand>
        <name>NAD(+)</name>
        <dbReference type="ChEBI" id="CHEBI:57540"/>
    </ligand>
</feature>
<feature type="binding site" evidence="1">
    <location>
        <position position="190"/>
    </location>
    <ligand>
        <name>NAD(+)</name>
        <dbReference type="ChEBI" id="CHEBI:57540"/>
    </ligand>
</feature>
<feature type="binding site" evidence="1">
    <location>
        <begin position="194"/>
        <end position="197"/>
    </location>
    <ligand>
        <name>7-phospho-2-dehydro-3-deoxy-D-arabino-heptonate</name>
        <dbReference type="ChEBI" id="CHEBI:58394"/>
    </ligand>
</feature>
<feature type="binding site" evidence="1">
    <location>
        <position position="194"/>
    </location>
    <ligand>
        <name>Zn(2+)</name>
        <dbReference type="ChEBI" id="CHEBI:29105"/>
        <note>catalytic</note>
    </ligand>
</feature>
<feature type="binding site" evidence="1">
    <location>
        <position position="250"/>
    </location>
    <ligand>
        <name>7-phospho-2-dehydro-3-deoxy-D-arabino-heptonate</name>
        <dbReference type="ChEBI" id="CHEBI:58394"/>
    </ligand>
</feature>
<feature type="binding site" evidence="1">
    <location>
        <begin position="264"/>
        <end position="268"/>
    </location>
    <ligand>
        <name>7-phospho-2-dehydro-3-deoxy-D-arabino-heptonate</name>
        <dbReference type="ChEBI" id="CHEBI:58394"/>
    </ligand>
</feature>
<feature type="binding site" evidence="1">
    <location>
        <position position="271"/>
    </location>
    <ligand>
        <name>7-phospho-2-dehydro-3-deoxy-D-arabino-heptonate</name>
        <dbReference type="ChEBI" id="CHEBI:58394"/>
    </ligand>
</feature>
<feature type="binding site" evidence="1">
    <location>
        <position position="271"/>
    </location>
    <ligand>
        <name>Zn(2+)</name>
        <dbReference type="ChEBI" id="CHEBI:29105"/>
        <note>catalytic</note>
    </ligand>
</feature>
<feature type="binding site" evidence="1">
    <location>
        <position position="287"/>
    </location>
    <ligand>
        <name>7-phospho-2-dehydro-3-deoxy-D-arabino-heptonate</name>
        <dbReference type="ChEBI" id="CHEBI:58394"/>
    </ligand>
</feature>
<feature type="binding site" evidence="1">
    <location>
        <position position="287"/>
    </location>
    <ligand>
        <name>Zn(2+)</name>
        <dbReference type="ChEBI" id="CHEBI:29105"/>
        <note>catalytic</note>
    </ligand>
</feature>
<feature type="binding site" evidence="1">
    <location>
        <position position="356"/>
    </location>
    <ligand>
        <name>7-phospho-2-dehydro-3-deoxy-D-arabino-heptonate</name>
        <dbReference type="ChEBI" id="CHEBI:58394"/>
    </ligand>
</feature>
<feature type="binding site" evidence="1">
    <location>
        <begin position="871"/>
        <end position="878"/>
    </location>
    <ligand>
        <name>ATP</name>
        <dbReference type="ChEBI" id="CHEBI:30616"/>
    </ligand>
</feature>
<reference key="1">
    <citation type="journal article" date="2015" name="Genome Announc.">
        <title>Genome sequence of Aspergillus flavus NRRL 3357, a strain that causes aflatoxin contamination of food and feed.</title>
        <authorList>
            <person name="Nierman W.C."/>
            <person name="Yu J."/>
            <person name="Fedorova-Abrams N.D."/>
            <person name="Losada L."/>
            <person name="Cleveland T.E."/>
            <person name="Bhatnagar D."/>
            <person name="Bennett J.W."/>
            <person name="Dean R."/>
            <person name="Payne G.A."/>
        </authorList>
    </citation>
    <scope>NUCLEOTIDE SEQUENCE [LARGE SCALE GENOMIC DNA]</scope>
    <source>
        <strain>ATCC 200026 / FGSC A1120 / IAM 13836 / NRRL 3357 / JCM 12722 / SRRC 167</strain>
    </source>
</reference>
<sequence length="1578" mass="171278">MAEPTKIKILGQESIIADFGLWRNYVAKDLISGCPSTTYVLITDTNIGSIYTPGFQKTFEDAATAVSPAPRLLVYHCPPGEVSKSRQTKADIEDWMLSQSPPCGRDTVVIALGGGVIGDLTGFVASTYMRGVRYVQVPTTLLAMVDSSIGGKTAIDTPLGKNLIGAIWQPTRIYIDLEFLETLPVREFVNGMAEVIKTAAISSEEEFTALEDNAEAILTAVRSERKPGQRWFEGIEDILKARILASARHKAYVVSADEREGGLRNLLNWGHSIGHAIEAILTPQVLHGECVAIGMVKEAELARHLGILKGVAVARIVKCIAAYGLPTSLKDSRIRKLTAGKHCSVDQLLFNMALDKKNDGPKKKIVLLSAIGRTYEPKASVVPNEDIGVVLAPSIEVHPGVEPASNIICIPPGSKSISNRALVLAALGSGTCRVKNLLHSDDTEVMLNALERLGAATFSWEEEGEVLVVNGKGGNLQASPSELYLGNAGTASRFLTTVATLANASSVDSSILTGNNRMKQRPIGDLVDALTANGASVEYVERKGSLPLKVAASGGFAGGRINLAAKVSSQYVSSLLMCAPYAKEPVTLKLVGGKPISQPYIDMTTAMMRSFGIDVQKSTTEEHTYHIPQGRYVNPAEYVIESDASSATYPLAIAAITGTTCTVPNIGSKSLQGDARFAVEVLGPMGCTVKQTDTSTTVVGPSDGILRPLPNVDMEPMTDAFLTASVLAAVARGDGASHTTRIYGIANQRVKECNRIKAMKDELAKFGVVCREHDDGLEIDGIDRSTLRQPAGGVYCYDDHRVAFSFSVLSLVAPQPTLILEKECVGKTWPGWWDTLRQKFSAKLEGKELKEEESSPLAGAGRATASVFIIGMRGAGKTTTGRWVAKTLNRPFVDLDTELENVEGQTIPDIVKQRGWQGFRDAELSLLQRTLKERSSGYVLACGGGIVEIPEARKLLIDYHKNKGNVMLIMRDIKQVMDFLNIDKTRPAYVEDMMGVWLRRKPWFQECSNIQYYSQHATGKLAKASEDFTRFFNVVTGEADSLSIIKRKKHSFFVSLTLPDLRTAGDILEKVCVGSDAVELRVDLLKDPASDSDIPSVDYVAEQMAFLRSYVSLPLIFTIRTKSQGGRFPDDAHDAAMELYRLAFRSGSEFVDLEIAFPDEMLRAVTEMKGYSKIIASHHDPKGELSWANMSWMKYYNRALEYGDIIKLVGVAKNLDDNTALRKFKSWAEEAHETPLIAINMGDNGQLSRILNGFMTPVSHPSLPFKAAPGQLSATEIRKGLSLMGEIKQKKFAVFGTPVSGSRSPVLHNTLFSQAGLPHEYGRLETANVEDVKDFIRSPDFGGASVTIPLKLDIMPLLDHITPEAEIIGAVNTIIPVADGDKPARLVGSNTDWQGMTLSLHNAGVETANKDASALVIGGGGTARAAIYALHSMGFSPIYVIGRSAPKLQSMVSTFPSSYNIQVIDSPETLKTIPTVAIGTIPADKPIDPVMRETLCHMFERAQEADADVVKTGEKAHRVLLEMAYKPSVTALMQLASDSNWHTIPGLEVLVGQGWYQFKHWTGISPLYEDARAAVLSS</sequence>
<evidence type="ECO:0000255" key="1">
    <source>
        <dbReference type="HAMAP-Rule" id="MF_03143"/>
    </source>
</evidence>